<keyword id="KW-0002">3D-structure</keyword>
<keyword id="KW-0808">Transferase</keyword>
<name>GST28_SCHBO</name>
<organism>
    <name type="scientific">Schistosoma bovis</name>
    <name type="common">Blood fluke</name>
    <dbReference type="NCBI Taxonomy" id="6184"/>
    <lineage>
        <taxon>Eukaryota</taxon>
        <taxon>Metazoa</taxon>
        <taxon>Spiralia</taxon>
        <taxon>Lophotrochozoa</taxon>
        <taxon>Platyhelminthes</taxon>
        <taxon>Trematoda</taxon>
        <taxon>Digenea</taxon>
        <taxon>Strigeidida</taxon>
        <taxon>Schistosomatoidea</taxon>
        <taxon>Schistosomatidae</taxon>
        <taxon>Schistosoma</taxon>
    </lineage>
</organism>
<proteinExistence type="evidence at protein level"/>
<feature type="chain" id="PRO_0000185813" description="Glutathione S-transferase class-mu 28 kDa isozyme">
    <location>
        <begin position="1"/>
        <end position="211"/>
    </location>
</feature>
<feature type="domain" description="GST N-terminal">
    <location>
        <begin position="4"/>
        <end position="86"/>
    </location>
</feature>
<feature type="domain" description="GST C-terminal">
    <location>
        <begin position="88"/>
        <end position="211"/>
    </location>
</feature>
<feature type="binding site" evidence="1">
    <location>
        <position position="10"/>
    </location>
    <ligand>
        <name>glutathione</name>
        <dbReference type="ChEBI" id="CHEBI:57925"/>
    </ligand>
</feature>
<feature type="binding site" evidence="1">
    <location>
        <position position="16"/>
    </location>
    <ligand>
        <name>glutathione</name>
        <dbReference type="ChEBI" id="CHEBI:57925"/>
    </ligand>
</feature>
<feature type="binding site" evidence="1">
    <location>
        <position position="41"/>
    </location>
    <ligand>
        <name>glutathione</name>
        <dbReference type="ChEBI" id="CHEBI:57925"/>
    </ligand>
</feature>
<feature type="binding site" evidence="1">
    <location>
        <position position="45"/>
    </location>
    <ligand>
        <name>glutathione</name>
        <dbReference type="ChEBI" id="CHEBI:57925"/>
    </ligand>
</feature>
<feature type="binding site" evidence="1">
    <location>
        <position position="53"/>
    </location>
    <ligand>
        <name>glutathione</name>
        <dbReference type="ChEBI" id="CHEBI:57925"/>
    </ligand>
</feature>
<feature type="binding site" evidence="1">
    <location>
        <position position="70"/>
    </location>
    <ligand>
        <name>glutathione</name>
        <dbReference type="ChEBI" id="CHEBI:57925"/>
    </ligand>
</feature>
<feature type="binding site" evidence="1">
    <location>
        <position position="71"/>
    </location>
    <ligand>
        <name>glutathione</name>
        <dbReference type="ChEBI" id="CHEBI:57925"/>
    </ligand>
</feature>
<feature type="binding site" evidence="1">
    <location>
        <position position="104"/>
    </location>
    <ligand>
        <name>glutathione</name>
        <dbReference type="ChEBI" id="CHEBI:57925"/>
    </ligand>
</feature>
<feature type="helix">
    <location>
        <begin position="49"/>
        <end position="51"/>
    </location>
</feature>
<protein>
    <recommendedName>
        <fullName>Glutathione S-transferase class-mu 28 kDa isozyme</fullName>
        <shortName>GST 28</shortName>
        <ecNumber evidence="1">2.5.1.18</ecNumber>
    </recommendedName>
    <alternativeName>
        <fullName>Sh28GST</fullName>
    </alternativeName>
</protein>
<accession>P30114</accession>
<dbReference type="EC" id="2.5.1.18" evidence="1"/>
<dbReference type="EMBL" id="M87800">
    <property type="protein sequence ID" value="AAA29893.1"/>
    <property type="molecule type" value="Genomic_DNA"/>
</dbReference>
<dbReference type="PDB" id="8ALS">
    <property type="method" value="X-ray"/>
    <property type="resolution" value="2.30 A"/>
    <property type="chains" value="A=4-207, B=3-207"/>
</dbReference>
<dbReference type="PDB" id="8BHZ">
    <property type="method" value="X-ray"/>
    <property type="resolution" value="2.40 A"/>
    <property type="chains" value="A=1-211"/>
</dbReference>
<dbReference type="PDBsum" id="8ALS"/>
<dbReference type="PDBsum" id="8BHZ"/>
<dbReference type="SMR" id="P30114"/>
<dbReference type="BRENDA" id="2.5.1.18">
    <property type="organism ID" value="7965"/>
</dbReference>
<dbReference type="EvolutionaryTrace" id="P30114"/>
<dbReference type="GO" id="GO:0004364">
    <property type="term" value="F:glutathione transferase activity"/>
    <property type="evidence" value="ECO:0007669"/>
    <property type="project" value="UniProtKB-EC"/>
</dbReference>
<dbReference type="GO" id="GO:0006749">
    <property type="term" value="P:glutathione metabolic process"/>
    <property type="evidence" value="ECO:0007669"/>
    <property type="project" value="TreeGrafter"/>
</dbReference>
<dbReference type="CDD" id="cd03192">
    <property type="entry name" value="GST_C_Sigma_like"/>
    <property type="match status" value="1"/>
</dbReference>
<dbReference type="CDD" id="cd03039">
    <property type="entry name" value="GST_N_Sigma_like"/>
    <property type="match status" value="1"/>
</dbReference>
<dbReference type="Gene3D" id="1.20.1050.10">
    <property type="match status" value="1"/>
</dbReference>
<dbReference type="Gene3D" id="3.40.30.10">
    <property type="entry name" value="Glutaredoxin"/>
    <property type="match status" value="1"/>
</dbReference>
<dbReference type="InterPro" id="IPR010987">
    <property type="entry name" value="Glutathione-S-Trfase_C-like"/>
</dbReference>
<dbReference type="InterPro" id="IPR036282">
    <property type="entry name" value="Glutathione-S-Trfase_C_sf"/>
</dbReference>
<dbReference type="InterPro" id="IPR004045">
    <property type="entry name" value="Glutathione_S-Trfase_N"/>
</dbReference>
<dbReference type="InterPro" id="IPR004046">
    <property type="entry name" value="GST_C"/>
</dbReference>
<dbReference type="InterPro" id="IPR050213">
    <property type="entry name" value="GST_superfamily"/>
</dbReference>
<dbReference type="InterPro" id="IPR036249">
    <property type="entry name" value="Thioredoxin-like_sf"/>
</dbReference>
<dbReference type="PANTHER" id="PTHR11571">
    <property type="entry name" value="GLUTATHIONE S-TRANSFERASE"/>
    <property type="match status" value="1"/>
</dbReference>
<dbReference type="PANTHER" id="PTHR11571:SF150">
    <property type="entry name" value="GLUTATHIONE S-TRANSFERASE"/>
    <property type="match status" value="1"/>
</dbReference>
<dbReference type="Pfam" id="PF00043">
    <property type="entry name" value="GST_C"/>
    <property type="match status" value="1"/>
</dbReference>
<dbReference type="Pfam" id="PF02798">
    <property type="entry name" value="GST_N"/>
    <property type="match status" value="1"/>
</dbReference>
<dbReference type="SFLD" id="SFLDG01205">
    <property type="entry name" value="AMPS.1"/>
    <property type="match status" value="1"/>
</dbReference>
<dbReference type="SFLD" id="SFLDG00363">
    <property type="entry name" value="AMPS_(cytGST):_Alpha-__Mu-__Pi"/>
    <property type="match status" value="1"/>
</dbReference>
<dbReference type="SUPFAM" id="SSF47616">
    <property type="entry name" value="GST C-terminal domain-like"/>
    <property type="match status" value="1"/>
</dbReference>
<dbReference type="SUPFAM" id="SSF52833">
    <property type="entry name" value="Thioredoxin-like"/>
    <property type="match status" value="1"/>
</dbReference>
<dbReference type="PROSITE" id="PS50405">
    <property type="entry name" value="GST_CTER"/>
    <property type="match status" value="1"/>
</dbReference>
<dbReference type="PROSITE" id="PS50404">
    <property type="entry name" value="GST_NTER"/>
    <property type="match status" value="1"/>
</dbReference>
<reference key="1">
    <citation type="journal article" date="1992" name="Mol. Biochem. Parasitol.">
        <title>Inter-species variation of schistosome 28-kDa glutathione S-transferases.</title>
        <authorList>
            <person name="Trottein F."/>
            <person name="Goding G."/>
            <person name="Sellin B."/>
            <person name="Gorillot I."/>
            <person name="Samaio M."/>
            <person name="Lecocq J.-P."/>
            <person name="Capron A."/>
        </authorList>
    </citation>
    <scope>NUCLEOTIDE SEQUENCE [GENOMIC DNA]</scope>
</reference>
<reference evidence="3" key="2">
    <citation type="submission" date="2022-08" db="PDB data bank">
        <title>The apo-crystal structure of a variant form of the 28-kDa Schistosoma haematobium glutathione transferase.</title>
        <authorList>
            <person name="Makumbe H.H."/>
            <person name="Pandian R."/>
            <person name="Sayed Y."/>
            <person name="Achilonu I.A."/>
        </authorList>
    </citation>
    <scope>X-RAY CRYSTALLOGRAPHY (2.30 ANGSTROMS) OF 4-207 AND 3-207</scope>
</reference>
<reference evidence="4" key="3">
    <citation type="submission" date="2022-11" db="PDB data bank">
        <title>Biophysical and biochemical characterization of 28-kDa glutathione transferase from Schistosoma haematobium.</title>
        <authorList>
            <person name="Mfeka S.M."/>
            <person name="Pandian R."/>
            <person name="Onisuru O."/>
            <person name="Sayed Y."/>
            <person name="Achilonu I.A."/>
        </authorList>
    </citation>
    <scope>X-RAY CRYSTALLOGRAPHY (2.40 ANGSTROMS)</scope>
</reference>
<comment type="function">
    <text evidence="1">Conjugation of reduced glutathione to a wide number of exogenous and endogenous hydrophobic electrophiles.</text>
</comment>
<comment type="function">
    <text evidence="1">GST isoenzymes appear to play a central role in the parasite detoxification system. Other functions are also suspected including a role in increasing the solubility of haematin in the parasite gut.</text>
</comment>
<comment type="catalytic activity">
    <reaction evidence="1">
        <text>RX + glutathione = an S-substituted glutathione + a halide anion + H(+)</text>
        <dbReference type="Rhea" id="RHEA:16437"/>
        <dbReference type="ChEBI" id="CHEBI:15378"/>
        <dbReference type="ChEBI" id="CHEBI:16042"/>
        <dbReference type="ChEBI" id="CHEBI:17792"/>
        <dbReference type="ChEBI" id="CHEBI:57925"/>
        <dbReference type="ChEBI" id="CHEBI:90779"/>
        <dbReference type="EC" id="2.5.1.18"/>
    </reaction>
</comment>
<comment type="subunit">
    <text evidence="1">Homodimer.</text>
</comment>
<comment type="similarity">
    <text evidence="2">Belongs to the GST superfamily. Mu family.</text>
</comment>
<evidence type="ECO:0000250" key="1">
    <source>
        <dbReference type="UniProtKB" id="P30113"/>
    </source>
</evidence>
<evidence type="ECO:0000305" key="2"/>
<evidence type="ECO:0007744" key="3">
    <source>
        <dbReference type="PDB" id="8ALS"/>
    </source>
</evidence>
<evidence type="ECO:0007744" key="4">
    <source>
        <dbReference type="PDB" id="8BHZ"/>
    </source>
</evidence>
<sequence>MTGDHIKVIYFNGRGRAESIRMTLVAAGVNYEDERISFQDWPKIKPTIPGGRLPAVKITDNHGHVKWMLESLAIARYMAKKHHMMGETDEEYYNVEKLIGQVEDLEHEYHKTLMKPEEEKQKITKEILNGKVPVLLDIICESLKASTGKLAVGDKVTLADLVLIAVIDHVTDLDKEFLTGKYPEIHKHRENLLASSPRLAKYLSDRAATPF</sequence>